<organism>
    <name type="scientific">Bos taurus</name>
    <name type="common">Bovine</name>
    <dbReference type="NCBI Taxonomy" id="9913"/>
    <lineage>
        <taxon>Eukaryota</taxon>
        <taxon>Metazoa</taxon>
        <taxon>Chordata</taxon>
        <taxon>Craniata</taxon>
        <taxon>Vertebrata</taxon>
        <taxon>Euteleostomi</taxon>
        <taxon>Mammalia</taxon>
        <taxon>Eutheria</taxon>
        <taxon>Laurasiatheria</taxon>
        <taxon>Artiodactyla</taxon>
        <taxon>Ruminantia</taxon>
        <taxon>Pecora</taxon>
        <taxon>Bovidae</taxon>
        <taxon>Bovinae</taxon>
        <taxon>Bos</taxon>
    </lineage>
</organism>
<comment type="function">
    <text evidence="1">Plays a central role in late thymocyte development by controlling both positive and negative T-cell selection. Required to sustain and/or integrate signals required for proper lineage commitment and maturation of T-cells. Regulates T-cell development through T-cell antigen receptor (TCR) signaling and in particular through the regulation of calcium influx and phosphorylation of Erk.</text>
</comment>
<comment type="subunit">
    <text evidence="1">Interacts with PLCG1, ITK, GRB2, and LAT.</text>
</comment>
<comment type="subcellular location">
    <subcellularLocation>
        <location evidence="1">Cytoplasm</location>
    </subcellularLocation>
    <subcellularLocation>
        <location evidence="1">Nucleus</location>
    </subcellularLocation>
</comment>
<comment type="alternative products">
    <event type="alternative splicing"/>
    <isoform>
        <id>A5D789-1</id>
        <name>1</name>
        <sequence type="displayed"/>
    </isoform>
    <isoform>
        <id>A5D789-2</id>
        <name>2</name>
        <sequence type="described" ref="VSP_037968"/>
    </isoform>
</comment>
<comment type="PTM">
    <text evidence="1">Phosphorylated on Tyr residues quickly after TCR stimulation.</text>
</comment>
<comment type="similarity">
    <text evidence="4">Belongs to the themis family.</text>
</comment>
<sequence>MALSLEEFIHSLDLRTLPRVLEIQSGFYFEGSIYEMFGNECCLSTGEVIKITDLKIKKIMAEICEHVEGCVSPQSFELPMNFPGLFKIVADTTPYLTMEEITKANHIRPSRPNHPCFYHQKDIKLENLIIKKGERIMLNSVEEINGEIMVNCSVLRNHQNHSFTLPLSQEGEFYECEDEHIYTLKEIIQWKIPKNRTRTVILTGFSAKWDSTNPFPRGFYGAVILKPVYEIQAVMKFRKDIVRILPSLDVEVKDITDSYDANWFLQVLSTQDLYEMANKQFPIVAEVIEAPQGNQLPISILQPGKTIVIHKKCQASKILASEIRSNSSKRHFLIPTSYKGKFKRRPREFPTAYDLEIAKSEKEPLHVVATKAFHSPFEELSSVSVGDEFLVHHSQTTEVLCEGIKKVMDGLACEKILKNSREVALLPLYMDGGFVEVIHDKKLYQISELCAQFRLPFNVKVSVRDLFIEKDILAAIPGLQLEESITNSYLLISDLANPKKCWEIPVGRVNMTVQLVNNFSGDTGSFLVSTLVEEITEEQYYLIRRYEKSFLHPPPRPPKHPSVEKIELTPLSLAKQKTVNLPKSPKSVHVDRSKKLYSNQAGLDSKVPAGCQNDLADLEKEKRKTEATAVTEIFKTEEHKK</sequence>
<feature type="chain" id="PRO_0000383150" description="Protein THEMIS">
    <location>
        <begin position="1"/>
        <end position="641"/>
    </location>
</feature>
<feature type="region of interest" description="CABIT 1">
    <location>
        <begin position="1"/>
        <end position="259"/>
    </location>
</feature>
<feature type="region of interest" description="CABIT 2">
    <location>
        <begin position="260"/>
        <end position="518"/>
    </location>
</feature>
<feature type="modified residue" description="Phosphoserine" evidence="2">
    <location>
        <position position="584"/>
    </location>
</feature>
<feature type="splice variant" id="VSP_037968" description="In isoform 2." evidence="3">
    <original>GERIMLNSVEEINGEIMVNCSVLRNHQNHSFTLPLSQEGEFYECEDEHIYTLKEIIQWKIPKNRTRTVILTGFSAKWDSTNPFPRGFYGAVILKPVYEIQAVMKF</original>
    <variation>V</variation>
    <location>
        <begin position="133"/>
        <end position="237"/>
    </location>
</feature>
<feature type="sequence conflict" description="In Ref. 1; AAI49611." evidence="4" ref="1">
    <original>I</original>
    <variation>V</variation>
    <location>
        <position position="468"/>
    </location>
</feature>
<accession>A5D789</accession>
<accession>A6QQ26</accession>
<protein>
    <recommendedName>
        <fullName>Protein THEMIS</fullName>
    </recommendedName>
    <alternativeName>
        <fullName>Thymocyte-expressed molecule involved in selection</fullName>
    </alternativeName>
</protein>
<evidence type="ECO:0000250" key="1">
    <source>
        <dbReference type="UniProtKB" id="Q8BGW0"/>
    </source>
</evidence>
<evidence type="ECO:0000250" key="2">
    <source>
        <dbReference type="UniProtKB" id="Q8N1K5"/>
    </source>
</evidence>
<evidence type="ECO:0000303" key="3">
    <source ref="1"/>
</evidence>
<evidence type="ECO:0000305" key="4"/>
<gene>
    <name type="primary">THEMIS</name>
</gene>
<reference key="1">
    <citation type="submission" date="2007-04" db="EMBL/GenBank/DDBJ databases">
        <authorList>
            <consortium name="NIH - Mammalian Gene Collection (MGC) project"/>
        </authorList>
    </citation>
    <scope>NUCLEOTIDE SEQUENCE [LARGE SCALE MRNA] (ISOFORMS 1 AND 2)</scope>
    <source>
        <strain>Hereford</strain>
        <tissue>Thymus</tissue>
    </source>
</reference>
<name>THMS1_BOVIN</name>
<dbReference type="EMBL" id="BC140469">
    <property type="protein sequence ID" value="AAI40470.1"/>
    <property type="molecule type" value="mRNA"/>
</dbReference>
<dbReference type="EMBL" id="BC149610">
    <property type="protein sequence ID" value="AAI49611.1"/>
    <property type="molecule type" value="mRNA"/>
</dbReference>
<dbReference type="RefSeq" id="NP_001091585.1">
    <molecule id="A5D789-1"/>
    <property type="nucleotide sequence ID" value="NM_001098116.1"/>
</dbReference>
<dbReference type="FunCoup" id="A5D789">
    <property type="interactions" value="198"/>
</dbReference>
<dbReference type="STRING" id="9913.ENSBTAP00000020742"/>
<dbReference type="PaxDb" id="9913-ENSBTAP00000020742"/>
<dbReference type="Ensembl" id="ENSBTAT00000020742.6">
    <molecule id="A5D789-1"/>
    <property type="protein sequence ID" value="ENSBTAP00000020742.5"/>
    <property type="gene ID" value="ENSBTAG00000015615.6"/>
</dbReference>
<dbReference type="GeneID" id="540554"/>
<dbReference type="KEGG" id="bta:540554"/>
<dbReference type="CTD" id="387357"/>
<dbReference type="VEuPathDB" id="HostDB:ENSBTAG00000015615"/>
<dbReference type="eggNOG" id="ENOG502QSJR">
    <property type="taxonomic scope" value="Eukaryota"/>
</dbReference>
<dbReference type="GeneTree" id="ENSGT00530000063770"/>
<dbReference type="HOGENOM" id="CLU_022319_1_0_1"/>
<dbReference type="InParanoid" id="A5D789"/>
<dbReference type="OMA" id="YDEGSMY"/>
<dbReference type="OrthoDB" id="9879477at2759"/>
<dbReference type="TreeFam" id="TF333479"/>
<dbReference type="Proteomes" id="UP000009136">
    <property type="component" value="Chromosome 9"/>
</dbReference>
<dbReference type="Bgee" id="ENSBTAG00000015615">
    <property type="expression patterns" value="Expressed in thymus and 39 other cell types or tissues"/>
</dbReference>
<dbReference type="GO" id="GO:0005911">
    <property type="term" value="C:cell-cell junction"/>
    <property type="evidence" value="ECO:0007669"/>
    <property type="project" value="Ensembl"/>
</dbReference>
<dbReference type="GO" id="GO:0008180">
    <property type="term" value="C:COP9 signalosome"/>
    <property type="evidence" value="ECO:0000250"/>
    <property type="project" value="UniProtKB"/>
</dbReference>
<dbReference type="GO" id="GO:0005737">
    <property type="term" value="C:cytoplasm"/>
    <property type="evidence" value="ECO:0000250"/>
    <property type="project" value="UniProtKB"/>
</dbReference>
<dbReference type="GO" id="GO:0005634">
    <property type="term" value="C:nucleus"/>
    <property type="evidence" value="ECO:0000250"/>
    <property type="project" value="UniProtKB"/>
</dbReference>
<dbReference type="GO" id="GO:0002250">
    <property type="term" value="P:adaptive immune response"/>
    <property type="evidence" value="ECO:0007669"/>
    <property type="project" value="UniProtKB-KW"/>
</dbReference>
<dbReference type="GO" id="GO:0043383">
    <property type="term" value="P:negative T cell selection"/>
    <property type="evidence" value="ECO:0000250"/>
    <property type="project" value="UniProtKB"/>
</dbReference>
<dbReference type="GO" id="GO:0043368">
    <property type="term" value="P:positive T cell selection"/>
    <property type="evidence" value="ECO:0000250"/>
    <property type="project" value="UniProtKB"/>
</dbReference>
<dbReference type="GO" id="GO:0050852">
    <property type="term" value="P:T cell receptor signaling pathway"/>
    <property type="evidence" value="ECO:0000250"/>
    <property type="project" value="UniProtKB"/>
</dbReference>
<dbReference type="InterPro" id="IPR025946">
    <property type="entry name" value="CABIT_dom"/>
</dbReference>
<dbReference type="InterPro" id="IPR039671">
    <property type="entry name" value="THEMIS"/>
</dbReference>
<dbReference type="PANTHER" id="PTHR15215">
    <property type="entry name" value="CABIT DOMAIN-CONTAINING PROTEIN"/>
    <property type="match status" value="1"/>
</dbReference>
<dbReference type="PANTHER" id="PTHR15215:SF1">
    <property type="entry name" value="PROTEIN THEMIS"/>
    <property type="match status" value="1"/>
</dbReference>
<dbReference type="Pfam" id="PF12736">
    <property type="entry name" value="CABIT"/>
    <property type="match status" value="2"/>
</dbReference>
<keyword id="KW-1064">Adaptive immunity</keyword>
<keyword id="KW-0025">Alternative splicing</keyword>
<keyword id="KW-0963">Cytoplasm</keyword>
<keyword id="KW-0217">Developmental protein</keyword>
<keyword id="KW-0391">Immunity</keyword>
<keyword id="KW-0539">Nucleus</keyword>
<keyword id="KW-0597">Phosphoprotein</keyword>
<keyword id="KW-1185">Reference proteome</keyword>
<proteinExistence type="evidence at transcript level"/>